<evidence type="ECO:0000255" key="1">
    <source>
        <dbReference type="HAMAP-Rule" id="MF_01328"/>
    </source>
</evidence>
<evidence type="ECO:0000305" key="2"/>
<name>RL4_METC4</name>
<proteinExistence type="inferred from homology"/>
<accession>B7L0R2</accession>
<dbReference type="EMBL" id="CP001298">
    <property type="protein sequence ID" value="ACK83283.1"/>
    <property type="molecule type" value="Genomic_DNA"/>
</dbReference>
<dbReference type="RefSeq" id="WP_003597092.1">
    <property type="nucleotide sequence ID" value="NC_011757.1"/>
</dbReference>
<dbReference type="SMR" id="B7L0R2"/>
<dbReference type="GeneID" id="72989851"/>
<dbReference type="KEGG" id="mch:Mchl_2441"/>
<dbReference type="HOGENOM" id="CLU_041575_5_1_5"/>
<dbReference type="Proteomes" id="UP000002385">
    <property type="component" value="Chromosome"/>
</dbReference>
<dbReference type="GO" id="GO:1990904">
    <property type="term" value="C:ribonucleoprotein complex"/>
    <property type="evidence" value="ECO:0007669"/>
    <property type="project" value="UniProtKB-KW"/>
</dbReference>
<dbReference type="GO" id="GO:0005840">
    <property type="term" value="C:ribosome"/>
    <property type="evidence" value="ECO:0007669"/>
    <property type="project" value="UniProtKB-KW"/>
</dbReference>
<dbReference type="GO" id="GO:0019843">
    <property type="term" value="F:rRNA binding"/>
    <property type="evidence" value="ECO:0007669"/>
    <property type="project" value="UniProtKB-UniRule"/>
</dbReference>
<dbReference type="GO" id="GO:0003735">
    <property type="term" value="F:structural constituent of ribosome"/>
    <property type="evidence" value="ECO:0007669"/>
    <property type="project" value="InterPro"/>
</dbReference>
<dbReference type="GO" id="GO:0006412">
    <property type="term" value="P:translation"/>
    <property type="evidence" value="ECO:0007669"/>
    <property type="project" value="UniProtKB-UniRule"/>
</dbReference>
<dbReference type="Gene3D" id="3.40.1370.10">
    <property type="match status" value="1"/>
</dbReference>
<dbReference type="HAMAP" id="MF_01328_B">
    <property type="entry name" value="Ribosomal_uL4_B"/>
    <property type="match status" value="1"/>
</dbReference>
<dbReference type="InterPro" id="IPR002136">
    <property type="entry name" value="Ribosomal_uL4"/>
</dbReference>
<dbReference type="InterPro" id="IPR013005">
    <property type="entry name" value="Ribosomal_uL4-like"/>
</dbReference>
<dbReference type="InterPro" id="IPR023574">
    <property type="entry name" value="Ribosomal_uL4_dom_sf"/>
</dbReference>
<dbReference type="NCBIfam" id="TIGR03953">
    <property type="entry name" value="rplD_bact"/>
    <property type="match status" value="1"/>
</dbReference>
<dbReference type="PANTHER" id="PTHR10746">
    <property type="entry name" value="50S RIBOSOMAL PROTEIN L4"/>
    <property type="match status" value="1"/>
</dbReference>
<dbReference type="PANTHER" id="PTHR10746:SF6">
    <property type="entry name" value="LARGE RIBOSOMAL SUBUNIT PROTEIN UL4M"/>
    <property type="match status" value="1"/>
</dbReference>
<dbReference type="Pfam" id="PF00573">
    <property type="entry name" value="Ribosomal_L4"/>
    <property type="match status" value="1"/>
</dbReference>
<dbReference type="SUPFAM" id="SSF52166">
    <property type="entry name" value="Ribosomal protein L4"/>
    <property type="match status" value="1"/>
</dbReference>
<organism>
    <name type="scientific">Methylorubrum extorquens (strain CM4 / NCIMB 13688)</name>
    <name type="common">Methylobacterium extorquens</name>
    <dbReference type="NCBI Taxonomy" id="440085"/>
    <lineage>
        <taxon>Bacteria</taxon>
        <taxon>Pseudomonadati</taxon>
        <taxon>Pseudomonadota</taxon>
        <taxon>Alphaproteobacteria</taxon>
        <taxon>Hyphomicrobiales</taxon>
        <taxon>Methylobacteriaceae</taxon>
        <taxon>Methylorubrum</taxon>
    </lineage>
</organism>
<gene>
    <name evidence="1" type="primary">rplD</name>
    <name type="ordered locus">Mchl_2441</name>
</gene>
<feature type="chain" id="PRO_1000166014" description="Large ribosomal subunit protein uL4">
    <location>
        <begin position="1"/>
        <end position="206"/>
    </location>
</feature>
<sequence length="206" mass="22516">MKLDITTLDGGSAGSVELNEAIYGLEPRADILQRMVRYQLAKRRAGTHAVKNRSDVDRTSKKLYKQKGTGNARHGAASAPQFRGGGRAFGPVVRDHSHDLPKKVRALALKHALSAKAKASTLIVVDDIKVDNHKTKAMIERFEKLGLSSALIIGGSEVDENFGRAARAIPKIDVLPVQGINVYDILRRDTLVLTRAAVDALEERFK</sequence>
<keyword id="KW-0687">Ribonucleoprotein</keyword>
<keyword id="KW-0689">Ribosomal protein</keyword>
<keyword id="KW-0694">RNA-binding</keyword>
<keyword id="KW-0699">rRNA-binding</keyword>
<reference key="1">
    <citation type="submission" date="2008-12" db="EMBL/GenBank/DDBJ databases">
        <title>Complete sequence of chromosome of Methylobacterium chloromethanicum CM4.</title>
        <authorList>
            <consortium name="US DOE Joint Genome Institute"/>
            <person name="Lucas S."/>
            <person name="Copeland A."/>
            <person name="Lapidus A."/>
            <person name="Glavina del Rio T."/>
            <person name="Dalin E."/>
            <person name="Tice H."/>
            <person name="Bruce D."/>
            <person name="Goodwin L."/>
            <person name="Pitluck S."/>
            <person name="Chertkov O."/>
            <person name="Brettin T."/>
            <person name="Detter J.C."/>
            <person name="Han C."/>
            <person name="Larimer F."/>
            <person name="Land M."/>
            <person name="Hauser L."/>
            <person name="Kyrpides N."/>
            <person name="Mikhailova N."/>
            <person name="Marx C."/>
            <person name="Richardson P."/>
        </authorList>
    </citation>
    <scope>NUCLEOTIDE SEQUENCE [LARGE SCALE GENOMIC DNA]</scope>
    <source>
        <strain>CM4 / NCIMB 13688</strain>
    </source>
</reference>
<comment type="function">
    <text evidence="1">One of the primary rRNA binding proteins, this protein initially binds near the 5'-end of the 23S rRNA. It is important during the early stages of 50S assembly. It makes multiple contacts with different domains of the 23S rRNA in the assembled 50S subunit and ribosome.</text>
</comment>
<comment type="function">
    <text evidence="1">Forms part of the polypeptide exit tunnel.</text>
</comment>
<comment type="subunit">
    <text evidence="1">Part of the 50S ribosomal subunit.</text>
</comment>
<comment type="similarity">
    <text evidence="1">Belongs to the universal ribosomal protein uL4 family.</text>
</comment>
<protein>
    <recommendedName>
        <fullName evidence="1">Large ribosomal subunit protein uL4</fullName>
    </recommendedName>
    <alternativeName>
        <fullName evidence="2">50S ribosomal protein L4</fullName>
    </alternativeName>
</protein>